<proteinExistence type="inferred from homology"/>
<organism>
    <name type="scientific">Petrotoga mobilis (strain DSM 10674 / SJ95)</name>
    <dbReference type="NCBI Taxonomy" id="403833"/>
    <lineage>
        <taxon>Bacteria</taxon>
        <taxon>Thermotogati</taxon>
        <taxon>Thermotogota</taxon>
        <taxon>Thermotogae</taxon>
        <taxon>Petrotogales</taxon>
        <taxon>Petrotogaceae</taxon>
        <taxon>Petrotoga</taxon>
    </lineage>
</organism>
<sequence>MLSDIEIARSAKLKKIDLIANELDIPEEYYNLYGKNIAKVSHKYLNELNFKNDGNLVMVTAITPTPAGEGKTTTSISLSMALNKIHKRSIVTLREPSLGPVMGIKGGAAGGGYSQVLPMEDINLHFTGDIHAVTSAHNLISAILDDYIKYNKYDIDSTQVSWPRTMDMNDRALREIIVALGGKKNGYPRQDGFIITAASEIMAILCLIENLEDLKKKLSNIVVAKNKKGEPVTVKDLEITGALSVLLKDAINPNLVQTIENTPAFVHGGPFANIAHGTNSILATKLALKLSDYVVTETGFGSDLGGEKFYDFVSPTFGLKPSATVLVATIRALKYHGGQNLKDLNTPNLESLEKGLPNLQVHVENLKKYNIPVVVSLNKFYSDTDEEINMVKDYCDKLGVEVSVNEGFEKGSEGAIDLAEKVVKVSEQQSELKSIYDFKDPLEVKIEKLAKNIYRASKVEYSSEALSTIKFLKKYGYENLPVIVAKTQYSISDDPKKLGFPKDYTFTIRDFELSAGAGFIVALAGDILRMPGLSKVPNAVNMDIDNEGNISGLS</sequence>
<name>FTHS_PETMO</name>
<feature type="chain" id="PRO_1000087653" description="Formate--tetrahydrofolate ligase">
    <location>
        <begin position="1"/>
        <end position="554"/>
    </location>
</feature>
<feature type="binding site" evidence="1">
    <location>
        <begin position="65"/>
        <end position="72"/>
    </location>
    <ligand>
        <name>ATP</name>
        <dbReference type="ChEBI" id="CHEBI:30616"/>
    </ligand>
</feature>
<comment type="catalytic activity">
    <reaction evidence="1">
        <text>(6S)-5,6,7,8-tetrahydrofolate + formate + ATP = (6R)-10-formyltetrahydrofolate + ADP + phosphate</text>
        <dbReference type="Rhea" id="RHEA:20221"/>
        <dbReference type="ChEBI" id="CHEBI:15740"/>
        <dbReference type="ChEBI" id="CHEBI:30616"/>
        <dbReference type="ChEBI" id="CHEBI:43474"/>
        <dbReference type="ChEBI" id="CHEBI:57453"/>
        <dbReference type="ChEBI" id="CHEBI:195366"/>
        <dbReference type="ChEBI" id="CHEBI:456216"/>
        <dbReference type="EC" id="6.3.4.3"/>
    </reaction>
</comment>
<comment type="pathway">
    <text evidence="1">One-carbon metabolism; tetrahydrofolate interconversion.</text>
</comment>
<comment type="similarity">
    <text evidence="1">Belongs to the formate--tetrahydrofolate ligase family.</text>
</comment>
<keyword id="KW-0067">ATP-binding</keyword>
<keyword id="KW-0436">Ligase</keyword>
<keyword id="KW-0547">Nucleotide-binding</keyword>
<keyword id="KW-0554">One-carbon metabolism</keyword>
<accession>A9BIV8</accession>
<dbReference type="EC" id="6.3.4.3" evidence="1"/>
<dbReference type="EMBL" id="CP000879">
    <property type="protein sequence ID" value="ABX32446.1"/>
    <property type="molecule type" value="Genomic_DNA"/>
</dbReference>
<dbReference type="RefSeq" id="WP_012209543.1">
    <property type="nucleotide sequence ID" value="NC_010003.1"/>
</dbReference>
<dbReference type="SMR" id="A9BIV8"/>
<dbReference type="STRING" id="403833.Pmob_1756"/>
<dbReference type="KEGG" id="pmo:Pmob_1756"/>
<dbReference type="eggNOG" id="COG2759">
    <property type="taxonomic scope" value="Bacteria"/>
</dbReference>
<dbReference type="HOGENOM" id="CLU_003601_3_3_0"/>
<dbReference type="OrthoDB" id="9761733at2"/>
<dbReference type="UniPathway" id="UPA00193"/>
<dbReference type="Proteomes" id="UP000000789">
    <property type="component" value="Chromosome"/>
</dbReference>
<dbReference type="GO" id="GO:0005524">
    <property type="term" value="F:ATP binding"/>
    <property type="evidence" value="ECO:0007669"/>
    <property type="project" value="UniProtKB-UniRule"/>
</dbReference>
<dbReference type="GO" id="GO:0004329">
    <property type="term" value="F:formate-tetrahydrofolate ligase activity"/>
    <property type="evidence" value="ECO:0007669"/>
    <property type="project" value="UniProtKB-UniRule"/>
</dbReference>
<dbReference type="GO" id="GO:0035999">
    <property type="term" value="P:tetrahydrofolate interconversion"/>
    <property type="evidence" value="ECO:0007669"/>
    <property type="project" value="UniProtKB-UniRule"/>
</dbReference>
<dbReference type="CDD" id="cd00477">
    <property type="entry name" value="FTHFS"/>
    <property type="match status" value="1"/>
</dbReference>
<dbReference type="FunFam" id="3.30.1510.10:FF:000001">
    <property type="entry name" value="Formate--tetrahydrofolate ligase"/>
    <property type="match status" value="1"/>
</dbReference>
<dbReference type="FunFam" id="3.10.410.10:FF:000001">
    <property type="entry name" value="Putative formate--tetrahydrofolate ligase"/>
    <property type="match status" value="1"/>
</dbReference>
<dbReference type="Gene3D" id="3.30.1510.10">
    <property type="entry name" value="Domain 2, N(10)-formyltetrahydrofolate synthetase"/>
    <property type="match status" value="1"/>
</dbReference>
<dbReference type="Gene3D" id="3.10.410.10">
    <property type="entry name" value="Formyltetrahydrofolate synthetase, domain 3"/>
    <property type="match status" value="1"/>
</dbReference>
<dbReference type="Gene3D" id="3.40.50.300">
    <property type="entry name" value="P-loop containing nucleotide triphosphate hydrolases"/>
    <property type="match status" value="1"/>
</dbReference>
<dbReference type="HAMAP" id="MF_01543">
    <property type="entry name" value="FTHFS"/>
    <property type="match status" value="1"/>
</dbReference>
<dbReference type="InterPro" id="IPR000559">
    <property type="entry name" value="Formate_THF_ligase"/>
</dbReference>
<dbReference type="InterPro" id="IPR020628">
    <property type="entry name" value="Formate_THF_ligase_CS"/>
</dbReference>
<dbReference type="InterPro" id="IPR027417">
    <property type="entry name" value="P-loop_NTPase"/>
</dbReference>
<dbReference type="NCBIfam" id="NF010030">
    <property type="entry name" value="PRK13505.1"/>
    <property type="match status" value="1"/>
</dbReference>
<dbReference type="Pfam" id="PF01268">
    <property type="entry name" value="FTHFS"/>
    <property type="match status" value="1"/>
</dbReference>
<dbReference type="SUPFAM" id="SSF52540">
    <property type="entry name" value="P-loop containing nucleoside triphosphate hydrolases"/>
    <property type="match status" value="1"/>
</dbReference>
<dbReference type="PROSITE" id="PS00721">
    <property type="entry name" value="FTHFS_1"/>
    <property type="match status" value="1"/>
</dbReference>
<dbReference type="PROSITE" id="PS00722">
    <property type="entry name" value="FTHFS_2"/>
    <property type="match status" value="1"/>
</dbReference>
<gene>
    <name evidence="1" type="primary">fhs</name>
    <name type="ordered locus">Pmob_1756</name>
</gene>
<evidence type="ECO:0000255" key="1">
    <source>
        <dbReference type="HAMAP-Rule" id="MF_01543"/>
    </source>
</evidence>
<protein>
    <recommendedName>
        <fullName evidence="1">Formate--tetrahydrofolate ligase</fullName>
        <ecNumber evidence="1">6.3.4.3</ecNumber>
    </recommendedName>
    <alternativeName>
        <fullName evidence="1">Formyltetrahydrofolate synthetase</fullName>
        <shortName evidence="1">FHS</shortName>
        <shortName evidence="1">FTHFS</shortName>
    </alternativeName>
</protein>
<reference key="1">
    <citation type="submission" date="2007-11" db="EMBL/GenBank/DDBJ databases">
        <title>Complete sequence of Petroga mobilis SJ95.</title>
        <authorList>
            <consortium name="US DOE Joint Genome Institute"/>
            <person name="Copeland A."/>
            <person name="Lucas S."/>
            <person name="Lapidus A."/>
            <person name="Barry K."/>
            <person name="Glavina del Rio T."/>
            <person name="Dalin E."/>
            <person name="Tice H."/>
            <person name="Pitluck S."/>
            <person name="Meincke L."/>
            <person name="Brettin T."/>
            <person name="Bruce D."/>
            <person name="Detter J.C."/>
            <person name="Han C."/>
            <person name="Kuske C.R."/>
            <person name="Schmutz J."/>
            <person name="Larimer F."/>
            <person name="Land M."/>
            <person name="Hauser L."/>
            <person name="Kyrpides N."/>
            <person name="Mikhailova N."/>
            <person name="Noll K."/>
            <person name="Richardson P."/>
        </authorList>
    </citation>
    <scope>NUCLEOTIDE SEQUENCE [LARGE SCALE GENOMIC DNA]</scope>
    <source>
        <strain>DSM 10674 / SJ95</strain>
    </source>
</reference>